<keyword id="KW-0963">Cytoplasm</keyword>
<keyword id="KW-0489">Methyltransferase</keyword>
<keyword id="KW-0698">rRNA processing</keyword>
<keyword id="KW-0949">S-adenosyl-L-methionine</keyword>
<keyword id="KW-0808">Transferase</keyword>
<proteinExistence type="inferred from homology"/>
<accession>B7VN06</accession>
<name>RSMG_VIBA3</name>
<protein>
    <recommendedName>
        <fullName evidence="1">Ribosomal RNA small subunit methyltransferase G</fullName>
        <ecNumber evidence="1">2.1.1.170</ecNumber>
    </recommendedName>
    <alternativeName>
        <fullName evidence="1">16S rRNA 7-methylguanosine methyltransferase</fullName>
        <shortName evidence="1">16S rRNA m7G methyltransferase</shortName>
    </alternativeName>
</protein>
<dbReference type="EC" id="2.1.1.170" evidence="1"/>
<dbReference type="EMBL" id="FM954972">
    <property type="protein sequence ID" value="CAV20414.1"/>
    <property type="molecule type" value="Genomic_DNA"/>
</dbReference>
<dbReference type="SMR" id="B7VN06"/>
<dbReference type="STRING" id="575788.VS_3162"/>
<dbReference type="KEGG" id="vsp:VS_3162"/>
<dbReference type="PATRIC" id="fig|575788.5.peg.4323"/>
<dbReference type="eggNOG" id="COG0357">
    <property type="taxonomic scope" value="Bacteria"/>
</dbReference>
<dbReference type="HOGENOM" id="CLU_065341_2_2_6"/>
<dbReference type="Proteomes" id="UP000009100">
    <property type="component" value="Chromosome 1"/>
</dbReference>
<dbReference type="GO" id="GO:0005829">
    <property type="term" value="C:cytosol"/>
    <property type="evidence" value="ECO:0007669"/>
    <property type="project" value="TreeGrafter"/>
</dbReference>
<dbReference type="GO" id="GO:0070043">
    <property type="term" value="F:rRNA (guanine-N7-)-methyltransferase activity"/>
    <property type="evidence" value="ECO:0007669"/>
    <property type="project" value="UniProtKB-UniRule"/>
</dbReference>
<dbReference type="CDD" id="cd02440">
    <property type="entry name" value="AdoMet_MTases"/>
    <property type="match status" value="1"/>
</dbReference>
<dbReference type="FunFam" id="3.40.50.150:FF:000032">
    <property type="entry name" value="Ribosomal RNA small subunit methyltransferase G"/>
    <property type="match status" value="1"/>
</dbReference>
<dbReference type="Gene3D" id="3.40.50.150">
    <property type="entry name" value="Vaccinia Virus protein VP39"/>
    <property type="match status" value="1"/>
</dbReference>
<dbReference type="HAMAP" id="MF_00074">
    <property type="entry name" value="16SrRNA_methyltr_G"/>
    <property type="match status" value="1"/>
</dbReference>
<dbReference type="InterPro" id="IPR003682">
    <property type="entry name" value="rRNA_ssu_MeTfrase_G"/>
</dbReference>
<dbReference type="InterPro" id="IPR029063">
    <property type="entry name" value="SAM-dependent_MTases_sf"/>
</dbReference>
<dbReference type="NCBIfam" id="TIGR00138">
    <property type="entry name" value="rsmG_gidB"/>
    <property type="match status" value="1"/>
</dbReference>
<dbReference type="PANTHER" id="PTHR31760">
    <property type="entry name" value="S-ADENOSYL-L-METHIONINE-DEPENDENT METHYLTRANSFERASES SUPERFAMILY PROTEIN"/>
    <property type="match status" value="1"/>
</dbReference>
<dbReference type="PANTHER" id="PTHR31760:SF0">
    <property type="entry name" value="S-ADENOSYL-L-METHIONINE-DEPENDENT METHYLTRANSFERASES SUPERFAMILY PROTEIN"/>
    <property type="match status" value="1"/>
</dbReference>
<dbReference type="Pfam" id="PF02527">
    <property type="entry name" value="GidB"/>
    <property type="match status" value="1"/>
</dbReference>
<dbReference type="PIRSF" id="PIRSF003078">
    <property type="entry name" value="GidB"/>
    <property type="match status" value="1"/>
</dbReference>
<dbReference type="SUPFAM" id="SSF53335">
    <property type="entry name" value="S-adenosyl-L-methionine-dependent methyltransferases"/>
    <property type="match status" value="1"/>
</dbReference>
<organism>
    <name type="scientific">Vibrio atlanticus (strain LGP32)</name>
    <name type="common">Vibrio splendidus (strain Mel32)</name>
    <dbReference type="NCBI Taxonomy" id="575788"/>
    <lineage>
        <taxon>Bacteria</taxon>
        <taxon>Pseudomonadati</taxon>
        <taxon>Pseudomonadota</taxon>
        <taxon>Gammaproteobacteria</taxon>
        <taxon>Vibrionales</taxon>
        <taxon>Vibrionaceae</taxon>
        <taxon>Vibrio</taxon>
    </lineage>
</organism>
<reference key="1">
    <citation type="submission" date="2009-02" db="EMBL/GenBank/DDBJ databases">
        <title>Vibrio splendidus str. LGP32 complete genome.</title>
        <authorList>
            <person name="Mazel D."/>
            <person name="Le Roux F."/>
        </authorList>
    </citation>
    <scope>NUCLEOTIDE SEQUENCE [LARGE SCALE GENOMIC DNA]</scope>
    <source>
        <strain>LGP32</strain>
    </source>
</reference>
<gene>
    <name evidence="1" type="primary">rsmG</name>
    <name type="ordered locus">VS_3162</name>
</gene>
<evidence type="ECO:0000255" key="1">
    <source>
        <dbReference type="HAMAP-Rule" id="MF_00074"/>
    </source>
</evidence>
<sequence length="210" mass="23921">MSALREKLDHLIGQTELEVSEKQRSQLVGYVELLNKWNKAYNLTSVRDPQEMMVKHILDSIIVSTHLQGKRFIDVGTGPGLPGIPLSIMNPDCEFYLLDSLGKRIRFIKQVIHELGIDNVVPIQSRVEEFQPEEKFDAVLSRAFASMTDMVEWCHHLPKEQSGVFLALKGQHPRDEIDLLPEWCSVTDIKALQVPELDGERHLVTLSRQG</sequence>
<comment type="function">
    <text evidence="1">Specifically methylates the N7 position of guanine in position 527 of 16S rRNA.</text>
</comment>
<comment type="catalytic activity">
    <reaction evidence="1">
        <text>guanosine(527) in 16S rRNA + S-adenosyl-L-methionine = N(7)-methylguanosine(527) in 16S rRNA + S-adenosyl-L-homocysteine</text>
        <dbReference type="Rhea" id="RHEA:42732"/>
        <dbReference type="Rhea" id="RHEA-COMP:10209"/>
        <dbReference type="Rhea" id="RHEA-COMP:10210"/>
        <dbReference type="ChEBI" id="CHEBI:57856"/>
        <dbReference type="ChEBI" id="CHEBI:59789"/>
        <dbReference type="ChEBI" id="CHEBI:74269"/>
        <dbReference type="ChEBI" id="CHEBI:74480"/>
        <dbReference type="EC" id="2.1.1.170"/>
    </reaction>
</comment>
<comment type="subcellular location">
    <subcellularLocation>
        <location evidence="1">Cytoplasm</location>
    </subcellularLocation>
</comment>
<comment type="similarity">
    <text evidence="1">Belongs to the methyltransferase superfamily. RNA methyltransferase RsmG family.</text>
</comment>
<feature type="chain" id="PRO_1000118208" description="Ribosomal RNA small subunit methyltransferase G">
    <location>
        <begin position="1"/>
        <end position="210"/>
    </location>
</feature>
<feature type="binding site" evidence="1">
    <location>
        <position position="76"/>
    </location>
    <ligand>
        <name>S-adenosyl-L-methionine</name>
        <dbReference type="ChEBI" id="CHEBI:59789"/>
    </ligand>
</feature>
<feature type="binding site" evidence="1">
    <location>
        <position position="81"/>
    </location>
    <ligand>
        <name>S-adenosyl-L-methionine</name>
        <dbReference type="ChEBI" id="CHEBI:59789"/>
    </ligand>
</feature>
<feature type="binding site" evidence="1">
    <location>
        <begin position="127"/>
        <end position="128"/>
    </location>
    <ligand>
        <name>S-adenosyl-L-methionine</name>
        <dbReference type="ChEBI" id="CHEBI:59789"/>
    </ligand>
</feature>
<feature type="binding site" evidence="1">
    <location>
        <position position="142"/>
    </location>
    <ligand>
        <name>S-adenosyl-L-methionine</name>
        <dbReference type="ChEBI" id="CHEBI:59789"/>
    </ligand>
</feature>